<feature type="chain" id="PRO_1000076469" description="Phosphoribosylaminoimidazole-succinocarboxamide synthase">
    <location>
        <begin position="1"/>
        <end position="234"/>
    </location>
</feature>
<accession>A5IRV3</accession>
<keyword id="KW-0067">ATP-binding</keyword>
<keyword id="KW-0436">Ligase</keyword>
<keyword id="KW-0547">Nucleotide-binding</keyword>
<keyword id="KW-0658">Purine biosynthesis</keyword>
<sequence>MTLLYEGKAKRIFSTNQENELRVEYKDEVTAGNGAKKDTMAGKGRLNNQITSIIFKYLQENGIESHFIKQLSETEQLVKPVKIIPLEVVVRNIASGSITKRLGFENGEVFREPLVEFFYKNDALNDPLITDDHVKLLNIASDEDIEILKSKALKINNVLKQLMDAMNLKLVDFKIEFGKTETGQILLADEISPDTCRIWDKATNANFDKDVYRNNTGSLIETYQIFLNKLEDLK</sequence>
<evidence type="ECO:0000255" key="1">
    <source>
        <dbReference type="HAMAP-Rule" id="MF_00137"/>
    </source>
</evidence>
<organism>
    <name type="scientific">Staphylococcus aureus (strain JH9)</name>
    <dbReference type="NCBI Taxonomy" id="359786"/>
    <lineage>
        <taxon>Bacteria</taxon>
        <taxon>Bacillati</taxon>
        <taxon>Bacillota</taxon>
        <taxon>Bacilli</taxon>
        <taxon>Bacillales</taxon>
        <taxon>Staphylococcaceae</taxon>
        <taxon>Staphylococcus</taxon>
    </lineage>
</organism>
<comment type="catalytic activity">
    <reaction evidence="1">
        <text>5-amino-1-(5-phospho-D-ribosyl)imidazole-4-carboxylate + L-aspartate + ATP = (2S)-2-[5-amino-1-(5-phospho-beta-D-ribosyl)imidazole-4-carboxamido]succinate + ADP + phosphate + 2 H(+)</text>
        <dbReference type="Rhea" id="RHEA:22628"/>
        <dbReference type="ChEBI" id="CHEBI:15378"/>
        <dbReference type="ChEBI" id="CHEBI:29991"/>
        <dbReference type="ChEBI" id="CHEBI:30616"/>
        <dbReference type="ChEBI" id="CHEBI:43474"/>
        <dbReference type="ChEBI" id="CHEBI:58443"/>
        <dbReference type="ChEBI" id="CHEBI:77657"/>
        <dbReference type="ChEBI" id="CHEBI:456216"/>
        <dbReference type="EC" id="6.3.2.6"/>
    </reaction>
</comment>
<comment type="pathway">
    <text evidence="1">Purine metabolism; IMP biosynthesis via de novo pathway; 5-amino-1-(5-phospho-D-ribosyl)imidazole-4-carboxamide from 5-amino-1-(5-phospho-D-ribosyl)imidazole-4-carboxylate: step 1/2.</text>
</comment>
<comment type="similarity">
    <text evidence="1">Belongs to the SAICAR synthetase family.</text>
</comment>
<gene>
    <name evidence="1" type="primary">purC</name>
    <name type="ordered locus">SaurJH9_1126</name>
</gene>
<proteinExistence type="inferred from homology"/>
<protein>
    <recommendedName>
        <fullName evidence="1">Phosphoribosylaminoimidazole-succinocarboxamide synthase</fullName>
        <ecNumber evidence="1">6.3.2.6</ecNumber>
    </recommendedName>
    <alternativeName>
        <fullName evidence="1">SAICAR synthetase</fullName>
    </alternativeName>
</protein>
<reference key="1">
    <citation type="submission" date="2007-05" db="EMBL/GenBank/DDBJ databases">
        <title>Complete sequence of chromosome of Staphylococcus aureus subsp. aureus JH9.</title>
        <authorList>
            <consortium name="US DOE Joint Genome Institute"/>
            <person name="Copeland A."/>
            <person name="Lucas S."/>
            <person name="Lapidus A."/>
            <person name="Barry K."/>
            <person name="Detter J.C."/>
            <person name="Glavina del Rio T."/>
            <person name="Hammon N."/>
            <person name="Israni S."/>
            <person name="Pitluck S."/>
            <person name="Chain P."/>
            <person name="Malfatti S."/>
            <person name="Shin M."/>
            <person name="Vergez L."/>
            <person name="Schmutz J."/>
            <person name="Larimer F."/>
            <person name="Land M."/>
            <person name="Hauser L."/>
            <person name="Kyrpides N."/>
            <person name="Kim E."/>
            <person name="Tomasz A."/>
            <person name="Richardson P."/>
        </authorList>
    </citation>
    <scope>NUCLEOTIDE SEQUENCE [LARGE SCALE GENOMIC DNA]</scope>
    <source>
        <strain>JH9</strain>
    </source>
</reference>
<dbReference type="EC" id="6.3.2.6" evidence="1"/>
<dbReference type="EMBL" id="CP000703">
    <property type="protein sequence ID" value="ABQ48926.1"/>
    <property type="molecule type" value="Genomic_DNA"/>
</dbReference>
<dbReference type="RefSeq" id="WP_000174053.1">
    <property type="nucleotide sequence ID" value="NC_009487.1"/>
</dbReference>
<dbReference type="SMR" id="A5IRV3"/>
<dbReference type="KEGG" id="saj:SaurJH9_1126"/>
<dbReference type="HOGENOM" id="CLU_061495_2_0_9"/>
<dbReference type="UniPathway" id="UPA00074">
    <property type="reaction ID" value="UER00131"/>
</dbReference>
<dbReference type="GO" id="GO:0005524">
    <property type="term" value="F:ATP binding"/>
    <property type="evidence" value="ECO:0007669"/>
    <property type="project" value="UniProtKB-KW"/>
</dbReference>
<dbReference type="GO" id="GO:0004639">
    <property type="term" value="F:phosphoribosylaminoimidazolesuccinocarboxamide synthase activity"/>
    <property type="evidence" value="ECO:0007669"/>
    <property type="project" value="UniProtKB-UniRule"/>
</dbReference>
<dbReference type="GO" id="GO:0006189">
    <property type="term" value="P:'de novo' IMP biosynthetic process"/>
    <property type="evidence" value="ECO:0007669"/>
    <property type="project" value="UniProtKB-UniRule"/>
</dbReference>
<dbReference type="GO" id="GO:0009236">
    <property type="term" value="P:cobalamin biosynthetic process"/>
    <property type="evidence" value="ECO:0007669"/>
    <property type="project" value="InterPro"/>
</dbReference>
<dbReference type="CDD" id="cd01415">
    <property type="entry name" value="SAICAR_synt_PurC"/>
    <property type="match status" value="1"/>
</dbReference>
<dbReference type="FunFam" id="3.30.200.20:FF:000189">
    <property type="entry name" value="Phosphoribosylaminoimidazole-succinocarboxamide synthase"/>
    <property type="match status" value="1"/>
</dbReference>
<dbReference type="FunFam" id="3.30.470.20:FF:000006">
    <property type="entry name" value="Phosphoribosylaminoimidazole-succinocarboxamide synthase"/>
    <property type="match status" value="1"/>
</dbReference>
<dbReference type="Gene3D" id="3.30.470.20">
    <property type="entry name" value="ATP-grasp fold, B domain"/>
    <property type="match status" value="1"/>
</dbReference>
<dbReference type="Gene3D" id="3.30.200.20">
    <property type="entry name" value="Phosphorylase Kinase, domain 1"/>
    <property type="match status" value="1"/>
</dbReference>
<dbReference type="HAMAP" id="MF_00137">
    <property type="entry name" value="SAICAR_synth"/>
    <property type="match status" value="1"/>
</dbReference>
<dbReference type="InterPro" id="IPR028923">
    <property type="entry name" value="SAICAR_synt/ADE2_N"/>
</dbReference>
<dbReference type="InterPro" id="IPR033934">
    <property type="entry name" value="SAICAR_synt_PurC"/>
</dbReference>
<dbReference type="InterPro" id="IPR001636">
    <property type="entry name" value="SAICAR_synth"/>
</dbReference>
<dbReference type="InterPro" id="IPR050089">
    <property type="entry name" value="SAICAR_synthetase"/>
</dbReference>
<dbReference type="InterPro" id="IPR018236">
    <property type="entry name" value="SAICAR_synthetase_CS"/>
</dbReference>
<dbReference type="NCBIfam" id="TIGR00081">
    <property type="entry name" value="purC"/>
    <property type="match status" value="1"/>
</dbReference>
<dbReference type="PANTHER" id="PTHR43599">
    <property type="entry name" value="MULTIFUNCTIONAL PROTEIN ADE2"/>
    <property type="match status" value="1"/>
</dbReference>
<dbReference type="PANTHER" id="PTHR43599:SF3">
    <property type="entry name" value="SI:DKEY-6E2.2"/>
    <property type="match status" value="1"/>
</dbReference>
<dbReference type="Pfam" id="PF01259">
    <property type="entry name" value="SAICAR_synt"/>
    <property type="match status" value="1"/>
</dbReference>
<dbReference type="SUPFAM" id="SSF56104">
    <property type="entry name" value="SAICAR synthase-like"/>
    <property type="match status" value="1"/>
</dbReference>
<dbReference type="PROSITE" id="PS01057">
    <property type="entry name" value="SAICAR_SYNTHETASE_1"/>
    <property type="match status" value="1"/>
</dbReference>
<dbReference type="PROSITE" id="PS01058">
    <property type="entry name" value="SAICAR_SYNTHETASE_2"/>
    <property type="match status" value="1"/>
</dbReference>
<name>PUR7_STAA9</name>